<feature type="signal peptide" evidence="1">
    <location>
        <begin position="1"/>
        <end position="21"/>
    </location>
</feature>
<feature type="propeptide" id="PRO_1000128921" evidence="1">
    <location>
        <begin position="22"/>
        <end position="58"/>
    </location>
</feature>
<feature type="chain" id="PRO_1000128922" description="Acid shock protein">
    <location>
        <begin position="59"/>
        <end position="102"/>
    </location>
</feature>
<feature type="region of interest" description="Disordered" evidence="2">
    <location>
        <begin position="22"/>
        <end position="102"/>
    </location>
</feature>
<feature type="compositionally biased region" description="Low complexity" evidence="2">
    <location>
        <begin position="22"/>
        <end position="41"/>
    </location>
</feature>
<feature type="compositionally biased region" description="Basic residues" evidence="2">
    <location>
        <begin position="80"/>
        <end position="90"/>
    </location>
</feature>
<feature type="compositionally biased region" description="Low complexity" evidence="2">
    <location>
        <begin position="91"/>
        <end position="102"/>
    </location>
</feature>
<comment type="function">
    <text evidence="1">Required for growth and/or survival at acidic conditions.</text>
</comment>
<comment type="subcellular location">
    <subcellularLocation>
        <location evidence="1">Periplasm</location>
    </subcellularLocation>
</comment>
<comment type="PTM">
    <text evidence="1">Proteolytic processing gives rise to the active protein.</text>
</comment>
<comment type="similarity">
    <text evidence="1">Belongs to the Asr family.</text>
</comment>
<dbReference type="EMBL" id="CU928161">
    <property type="protein sequence ID" value="CAR02957.1"/>
    <property type="molecule type" value="Genomic_DNA"/>
</dbReference>
<dbReference type="RefSeq" id="WP_001362115.1">
    <property type="nucleotide sequence ID" value="NC_011742.1"/>
</dbReference>
<dbReference type="KEGG" id="ecz:ECS88_1642"/>
<dbReference type="HOGENOM" id="CLU_102486_2_0_6"/>
<dbReference type="Proteomes" id="UP000000747">
    <property type="component" value="Chromosome"/>
</dbReference>
<dbReference type="GO" id="GO:0042597">
    <property type="term" value="C:periplasmic space"/>
    <property type="evidence" value="ECO:0007669"/>
    <property type="project" value="UniProtKB-SubCell"/>
</dbReference>
<dbReference type="HAMAP" id="MF_00546">
    <property type="entry name" value="Asr"/>
    <property type="match status" value="1"/>
</dbReference>
<dbReference type="InterPro" id="IPR023497">
    <property type="entry name" value="Acid_shock"/>
</dbReference>
<dbReference type="NCBIfam" id="NF033636">
    <property type="entry name" value="acid_shock_Asr"/>
    <property type="match status" value="1"/>
</dbReference>
<dbReference type="Pfam" id="PF06392">
    <property type="entry name" value="Asr"/>
    <property type="match status" value="1"/>
</dbReference>
<gene>
    <name evidence="1" type="primary">asr</name>
    <name type="ordered locus">ECS88_1642</name>
</gene>
<evidence type="ECO:0000255" key="1">
    <source>
        <dbReference type="HAMAP-Rule" id="MF_00546"/>
    </source>
</evidence>
<evidence type="ECO:0000256" key="2">
    <source>
        <dbReference type="SAM" id="MobiDB-lite"/>
    </source>
</evidence>
<name>ASR_ECO45</name>
<accession>B7M9V0</accession>
<reference key="1">
    <citation type="journal article" date="2009" name="PLoS Genet.">
        <title>Organised genome dynamics in the Escherichia coli species results in highly diverse adaptive paths.</title>
        <authorList>
            <person name="Touchon M."/>
            <person name="Hoede C."/>
            <person name="Tenaillon O."/>
            <person name="Barbe V."/>
            <person name="Baeriswyl S."/>
            <person name="Bidet P."/>
            <person name="Bingen E."/>
            <person name="Bonacorsi S."/>
            <person name="Bouchier C."/>
            <person name="Bouvet O."/>
            <person name="Calteau A."/>
            <person name="Chiapello H."/>
            <person name="Clermont O."/>
            <person name="Cruveiller S."/>
            <person name="Danchin A."/>
            <person name="Diard M."/>
            <person name="Dossat C."/>
            <person name="Karoui M.E."/>
            <person name="Frapy E."/>
            <person name="Garry L."/>
            <person name="Ghigo J.M."/>
            <person name="Gilles A.M."/>
            <person name="Johnson J."/>
            <person name="Le Bouguenec C."/>
            <person name="Lescat M."/>
            <person name="Mangenot S."/>
            <person name="Martinez-Jehanne V."/>
            <person name="Matic I."/>
            <person name="Nassif X."/>
            <person name="Oztas S."/>
            <person name="Petit M.A."/>
            <person name="Pichon C."/>
            <person name="Rouy Z."/>
            <person name="Ruf C.S."/>
            <person name="Schneider D."/>
            <person name="Tourret J."/>
            <person name="Vacherie B."/>
            <person name="Vallenet D."/>
            <person name="Medigue C."/>
            <person name="Rocha E.P.C."/>
            <person name="Denamur E."/>
        </authorList>
    </citation>
    <scope>NUCLEOTIDE SEQUENCE [LARGE SCALE GENOMIC DNA]</scope>
    <source>
        <strain>S88 / ExPEC</strain>
    </source>
</reference>
<sequence length="102" mass="10531">MKKVLALVVAAAMGLSSAAFAAETATTPAPTATTTKAAPAKTTHHKKQHKAAPAQKAQAAKKHHKNAKAEQKAPEQKAQAAKKHAKKHSHQQPAKPAAQPAA</sequence>
<protein>
    <recommendedName>
        <fullName evidence="1">Acid shock protein</fullName>
    </recommendedName>
</protein>
<keyword id="KW-0574">Periplasm</keyword>
<keyword id="KW-1185">Reference proteome</keyword>
<keyword id="KW-0732">Signal</keyword>
<organism>
    <name type="scientific">Escherichia coli O45:K1 (strain S88 / ExPEC)</name>
    <dbReference type="NCBI Taxonomy" id="585035"/>
    <lineage>
        <taxon>Bacteria</taxon>
        <taxon>Pseudomonadati</taxon>
        <taxon>Pseudomonadota</taxon>
        <taxon>Gammaproteobacteria</taxon>
        <taxon>Enterobacterales</taxon>
        <taxon>Enterobacteriaceae</taxon>
        <taxon>Escherichia</taxon>
    </lineage>
</organism>
<proteinExistence type="inferred from homology"/>